<feature type="chain" id="PRO_0000334892" description="Ribonuclease HII">
    <location>
        <begin position="1"/>
        <end position="198"/>
    </location>
</feature>
<feature type="domain" description="RNase H type-2" evidence="2">
    <location>
        <begin position="2"/>
        <end position="191"/>
    </location>
</feature>
<feature type="binding site" evidence="1">
    <location>
        <position position="8"/>
    </location>
    <ligand>
        <name>a divalent metal cation</name>
        <dbReference type="ChEBI" id="CHEBI:60240"/>
    </ligand>
</feature>
<feature type="binding site" evidence="1">
    <location>
        <position position="9"/>
    </location>
    <ligand>
        <name>a divalent metal cation</name>
        <dbReference type="ChEBI" id="CHEBI:60240"/>
    </ligand>
</feature>
<feature type="binding site" evidence="1">
    <location>
        <position position="100"/>
    </location>
    <ligand>
        <name>a divalent metal cation</name>
        <dbReference type="ChEBI" id="CHEBI:60240"/>
    </ligand>
</feature>
<accession>A4J661</accession>
<reference key="1">
    <citation type="submission" date="2007-03" db="EMBL/GenBank/DDBJ databases">
        <title>Complete sequence of Desulfotomaculum reducens MI-1.</title>
        <authorList>
            <consortium name="US DOE Joint Genome Institute"/>
            <person name="Copeland A."/>
            <person name="Lucas S."/>
            <person name="Lapidus A."/>
            <person name="Barry K."/>
            <person name="Detter J.C."/>
            <person name="Glavina del Rio T."/>
            <person name="Hammon N."/>
            <person name="Israni S."/>
            <person name="Dalin E."/>
            <person name="Tice H."/>
            <person name="Pitluck S."/>
            <person name="Sims D."/>
            <person name="Brettin T."/>
            <person name="Bruce D."/>
            <person name="Han C."/>
            <person name="Tapia R."/>
            <person name="Schmutz J."/>
            <person name="Larimer F."/>
            <person name="Land M."/>
            <person name="Hauser L."/>
            <person name="Kyrpides N."/>
            <person name="Kim E."/>
            <person name="Tebo B.M."/>
            <person name="Richardson P."/>
        </authorList>
    </citation>
    <scope>NUCLEOTIDE SEQUENCE [LARGE SCALE GENOMIC DNA]</scope>
    <source>
        <strain>ATCC BAA-1160 / DSM 100696 / MI-1</strain>
    </source>
</reference>
<organism>
    <name type="scientific">Desulforamulus reducens (strain ATCC BAA-1160 / DSM 100696 / MI-1)</name>
    <name type="common">Desulfotomaculum reducens</name>
    <dbReference type="NCBI Taxonomy" id="349161"/>
    <lineage>
        <taxon>Bacteria</taxon>
        <taxon>Bacillati</taxon>
        <taxon>Bacillota</taxon>
        <taxon>Clostridia</taxon>
        <taxon>Eubacteriales</taxon>
        <taxon>Peptococcaceae</taxon>
        <taxon>Desulforamulus</taxon>
    </lineage>
</organism>
<keyword id="KW-0963">Cytoplasm</keyword>
<keyword id="KW-0255">Endonuclease</keyword>
<keyword id="KW-0378">Hydrolase</keyword>
<keyword id="KW-0464">Manganese</keyword>
<keyword id="KW-0479">Metal-binding</keyword>
<keyword id="KW-0540">Nuclease</keyword>
<keyword id="KW-1185">Reference proteome</keyword>
<comment type="function">
    <text evidence="1">Endonuclease that specifically degrades the RNA of RNA-DNA hybrids.</text>
</comment>
<comment type="catalytic activity">
    <reaction evidence="1">
        <text>Endonucleolytic cleavage to 5'-phosphomonoester.</text>
        <dbReference type="EC" id="3.1.26.4"/>
    </reaction>
</comment>
<comment type="cofactor">
    <cofactor evidence="1">
        <name>Mn(2+)</name>
        <dbReference type="ChEBI" id="CHEBI:29035"/>
    </cofactor>
    <cofactor evidence="1">
        <name>Mg(2+)</name>
        <dbReference type="ChEBI" id="CHEBI:18420"/>
    </cofactor>
    <text evidence="1">Manganese or magnesium. Binds 1 divalent metal ion per monomer in the absence of substrate. May bind a second metal ion after substrate binding.</text>
</comment>
<comment type="subcellular location">
    <subcellularLocation>
        <location evidence="1">Cytoplasm</location>
    </subcellularLocation>
</comment>
<comment type="similarity">
    <text evidence="1">Belongs to the RNase HII family.</text>
</comment>
<evidence type="ECO:0000255" key="1">
    <source>
        <dbReference type="HAMAP-Rule" id="MF_00052"/>
    </source>
</evidence>
<evidence type="ECO:0000255" key="2">
    <source>
        <dbReference type="PROSITE-ProRule" id="PRU01319"/>
    </source>
</evidence>
<sequence>MVLECGVDETGRGSCISGIYASACILDPAHPIEGLRDSKKLSARKREILAEEIKQYALSWCIAQASLEEVEQLNVHHATLLAMKRAIEGLSIRANKVYVDGIHLPEVDIPAEAIVKGDDLIPAISAASILAKVARDGAMLEYHEKYPQYGFNSHKGYLTKAHREALKKYGPSPIHRKTYAPIRELLVGKDNEQIEMFE</sequence>
<name>RNH2_DESRM</name>
<dbReference type="EC" id="3.1.26.4" evidence="1"/>
<dbReference type="EMBL" id="CP000612">
    <property type="protein sequence ID" value="ABO50564.1"/>
    <property type="molecule type" value="Genomic_DNA"/>
</dbReference>
<dbReference type="RefSeq" id="WP_011878370.1">
    <property type="nucleotide sequence ID" value="NC_009253.1"/>
</dbReference>
<dbReference type="SMR" id="A4J661"/>
<dbReference type="STRING" id="349161.Dred_2047"/>
<dbReference type="KEGG" id="drm:Dred_2047"/>
<dbReference type="eggNOG" id="COG0164">
    <property type="taxonomic scope" value="Bacteria"/>
</dbReference>
<dbReference type="HOGENOM" id="CLU_036532_3_2_9"/>
<dbReference type="OrthoDB" id="9803420at2"/>
<dbReference type="Proteomes" id="UP000001556">
    <property type="component" value="Chromosome"/>
</dbReference>
<dbReference type="GO" id="GO:0005737">
    <property type="term" value="C:cytoplasm"/>
    <property type="evidence" value="ECO:0007669"/>
    <property type="project" value="UniProtKB-SubCell"/>
</dbReference>
<dbReference type="GO" id="GO:0032299">
    <property type="term" value="C:ribonuclease H2 complex"/>
    <property type="evidence" value="ECO:0007669"/>
    <property type="project" value="TreeGrafter"/>
</dbReference>
<dbReference type="GO" id="GO:0030145">
    <property type="term" value="F:manganese ion binding"/>
    <property type="evidence" value="ECO:0007669"/>
    <property type="project" value="UniProtKB-UniRule"/>
</dbReference>
<dbReference type="GO" id="GO:0003723">
    <property type="term" value="F:RNA binding"/>
    <property type="evidence" value="ECO:0007669"/>
    <property type="project" value="InterPro"/>
</dbReference>
<dbReference type="GO" id="GO:0004523">
    <property type="term" value="F:RNA-DNA hybrid ribonuclease activity"/>
    <property type="evidence" value="ECO:0007669"/>
    <property type="project" value="UniProtKB-UniRule"/>
</dbReference>
<dbReference type="GO" id="GO:0043137">
    <property type="term" value="P:DNA replication, removal of RNA primer"/>
    <property type="evidence" value="ECO:0007669"/>
    <property type="project" value="TreeGrafter"/>
</dbReference>
<dbReference type="GO" id="GO:0006298">
    <property type="term" value="P:mismatch repair"/>
    <property type="evidence" value="ECO:0007669"/>
    <property type="project" value="TreeGrafter"/>
</dbReference>
<dbReference type="CDD" id="cd07182">
    <property type="entry name" value="RNase_HII_bacteria_HII_like"/>
    <property type="match status" value="1"/>
</dbReference>
<dbReference type="Gene3D" id="3.30.420.10">
    <property type="entry name" value="Ribonuclease H-like superfamily/Ribonuclease H"/>
    <property type="match status" value="1"/>
</dbReference>
<dbReference type="HAMAP" id="MF_00052_B">
    <property type="entry name" value="RNase_HII_B"/>
    <property type="match status" value="1"/>
</dbReference>
<dbReference type="InterPro" id="IPR022898">
    <property type="entry name" value="RNase_HII"/>
</dbReference>
<dbReference type="InterPro" id="IPR001352">
    <property type="entry name" value="RNase_HII/HIII"/>
</dbReference>
<dbReference type="InterPro" id="IPR024567">
    <property type="entry name" value="RNase_HII/HIII_dom"/>
</dbReference>
<dbReference type="InterPro" id="IPR012337">
    <property type="entry name" value="RNaseH-like_sf"/>
</dbReference>
<dbReference type="InterPro" id="IPR036397">
    <property type="entry name" value="RNaseH_sf"/>
</dbReference>
<dbReference type="NCBIfam" id="NF000595">
    <property type="entry name" value="PRK00015.1-3"/>
    <property type="match status" value="1"/>
</dbReference>
<dbReference type="NCBIfam" id="NF000596">
    <property type="entry name" value="PRK00015.1-4"/>
    <property type="match status" value="1"/>
</dbReference>
<dbReference type="PANTHER" id="PTHR10954">
    <property type="entry name" value="RIBONUCLEASE H2 SUBUNIT A"/>
    <property type="match status" value="1"/>
</dbReference>
<dbReference type="PANTHER" id="PTHR10954:SF18">
    <property type="entry name" value="RIBONUCLEASE HII"/>
    <property type="match status" value="1"/>
</dbReference>
<dbReference type="Pfam" id="PF01351">
    <property type="entry name" value="RNase_HII"/>
    <property type="match status" value="1"/>
</dbReference>
<dbReference type="SUPFAM" id="SSF53098">
    <property type="entry name" value="Ribonuclease H-like"/>
    <property type="match status" value="1"/>
</dbReference>
<dbReference type="PROSITE" id="PS51975">
    <property type="entry name" value="RNASE_H_2"/>
    <property type="match status" value="1"/>
</dbReference>
<protein>
    <recommendedName>
        <fullName evidence="1">Ribonuclease HII</fullName>
        <shortName evidence="1">RNase HII</shortName>
        <ecNumber evidence="1">3.1.26.4</ecNumber>
    </recommendedName>
</protein>
<gene>
    <name evidence="1" type="primary">rnhB</name>
    <name type="ordered locus">Dred_2047</name>
</gene>
<proteinExistence type="inferred from homology"/>